<proteinExistence type="evidence at protein level"/>
<protein>
    <recommendedName>
        <fullName>Lysozyme C-1</fullName>
        <ecNumber>3.2.1.17</ecNumber>
    </recommendedName>
    <alternativeName>
        <fullName>1,4-beta-N-acetylmuramidase C</fullName>
    </alternativeName>
</protein>
<comment type="function">
    <text>Lysozymes have primarily a bacteriolytic function; those in tissues and body fluids are associated with the monocyte-macrophage system and enhance the activity of immunoagents.</text>
</comment>
<comment type="catalytic activity">
    <reaction>
        <text>Hydrolysis of (1-&gt;4)-beta-linkages between N-acetylmuramic acid and N-acetyl-D-glucosamine residues in a peptidoglycan and between N-acetyl-D-glucosamine residues in chitodextrins.</text>
        <dbReference type="EC" id="3.2.1.17"/>
    </reaction>
</comment>
<comment type="subcellular location">
    <subcellularLocation>
        <location>Secreted</location>
    </subcellularLocation>
</comment>
<comment type="miscellaneous">
    <text>Lysozyme C is capable of both hydrolysis and transglycosylation; it also shows a slight esterase activity. It acts rapidly on both peptide-substituted and unsubstituted peptidoglycan, and slowly on chitin oligosaccharides.</text>
</comment>
<comment type="miscellaneous">
    <text>The sequence of the DL-2 variant of lysozyme C from Pekin duck is shown. As only one lysozyme, or any combination of 2 lysozymes, but never all 3, occurred in one egg, the existence of 3 alleles at one locus has been suggested.</text>
</comment>
<comment type="miscellaneous">
    <text>The amino acid compositions of DL-1, DL-2, and DL-3 are identical with those of lysozymes A, B, and C, respectively. DL-1 and DL-2 are electrophoretically and immunologically indistinguishable from lysozymes A and B, respectively.</text>
</comment>
<comment type="similarity">
    <text evidence="1">Belongs to the glycosyl hydrolase 22 family.</text>
</comment>
<feature type="signal peptide" evidence="3 4">
    <location>
        <begin position="1"/>
        <end position="18"/>
    </location>
</feature>
<feature type="chain" id="PRO_0000018494" description="Lysozyme C-1">
    <location>
        <begin position="19"/>
        <end position="147"/>
    </location>
</feature>
<feature type="domain" description="C-type lysozyme" evidence="1">
    <location>
        <begin position="19"/>
        <end position="147"/>
    </location>
</feature>
<feature type="active site" evidence="1">
    <location>
        <position position="53"/>
    </location>
</feature>
<feature type="active site" evidence="1">
    <location>
        <position position="70"/>
    </location>
</feature>
<feature type="disulfide bond" evidence="1 2">
    <location>
        <begin position="24"/>
        <end position="145"/>
    </location>
</feature>
<feature type="disulfide bond" evidence="1 2">
    <location>
        <begin position="48"/>
        <end position="133"/>
    </location>
</feature>
<feature type="disulfide bond" evidence="1 2">
    <location>
        <begin position="82"/>
        <end position="98"/>
    </location>
</feature>
<feature type="disulfide bond" evidence="1 2">
    <location>
        <begin position="94"/>
        <end position="112"/>
    </location>
</feature>
<feature type="sequence variant" description="In DL3.">
    <original>L</original>
    <variation>I</variation>
    <location>
        <position position="43"/>
    </location>
</feature>
<feature type="sequence variant" description="In DL1 and lysozyme II.">
    <original>G</original>
    <variation>S</variation>
    <location>
        <position position="55"/>
    </location>
</feature>
<feature type="sequence variant" description="In lysozyme II.">
    <original>Q</original>
    <variation>E</variation>
    <location>
        <position position="75"/>
    </location>
</feature>
<feature type="sequence variant" description="In DL1 and lysozyme II.">
    <original>R</original>
    <variation>G</variation>
    <location>
        <position position="89"/>
    </location>
</feature>
<feature type="sequence variant" description="In DL3.">
    <original>P</original>
    <variation>R</variation>
    <location>
        <position position="97"/>
    </location>
</feature>
<feature type="helix" evidence="5">
    <location>
        <begin position="23"/>
        <end position="32"/>
    </location>
</feature>
<feature type="helix" evidence="5">
    <location>
        <begin position="43"/>
        <end position="54"/>
    </location>
</feature>
<feature type="strand" evidence="5">
    <location>
        <begin position="61"/>
        <end position="63"/>
    </location>
</feature>
<feature type="strand" evidence="5">
    <location>
        <begin position="69"/>
        <end position="71"/>
    </location>
</feature>
<feature type="turn" evidence="5">
    <location>
        <begin position="72"/>
        <end position="75"/>
    </location>
</feature>
<feature type="turn" evidence="5">
    <location>
        <begin position="78"/>
        <end position="80"/>
    </location>
</feature>
<feature type="helix" evidence="5">
    <location>
        <begin position="98"/>
        <end position="102"/>
    </location>
</feature>
<feature type="strand" evidence="6">
    <location>
        <begin position="103"/>
        <end position="105"/>
    </location>
</feature>
<feature type="helix" evidence="5">
    <location>
        <begin position="107"/>
        <end position="119"/>
    </location>
</feature>
<feature type="helix" evidence="6">
    <location>
        <begin position="122"/>
        <end position="125"/>
    </location>
</feature>
<feature type="helix" evidence="5">
    <location>
        <begin position="127"/>
        <end position="132"/>
    </location>
</feature>
<feature type="turn" evidence="5">
    <location>
        <begin position="133"/>
        <end position="135"/>
    </location>
</feature>
<feature type="helix" evidence="5">
    <location>
        <begin position="138"/>
        <end position="142"/>
    </location>
</feature>
<reference key="1">
    <citation type="journal article" date="1986" name="J. Biol. Chem.">
        <title>Evolutionary shift in the site of cleavage of prelysozyme.</title>
        <authorList>
            <person name="Weisman L.S."/>
            <person name="Krummel B.M."/>
            <person name="Wilson A.C."/>
        </authorList>
    </citation>
    <scope>PROTEIN SEQUENCE OF 1-18 (PRECURSOR PROTEIN)</scope>
    <source>
        <strain>Pekin breed</strain>
    </source>
</reference>
<reference key="2">
    <citation type="journal article" date="1982" name="J. Biochem.">
        <title>Chemical and immunological properties and amino acid sequences of three lysozymes from Peking-duck egg white.</title>
        <authorList>
            <person name="Kondo K."/>
            <person name="Fujio H."/>
            <person name="Amano T."/>
        </authorList>
    </citation>
    <scope>PROTEIN SEQUENCE OF 19-147 (DL-1; DL-2 AND DL-3)</scope>
    <source>
        <strain>Pekin breed</strain>
    </source>
</reference>
<reference key="3">
    <citation type="journal article" date="1971" name="Eur. J. Biochem.">
        <title>Multiple forms of duck-egg white lysozyme. Primary structure of two duck lysozymes.</title>
        <authorList>
            <person name="Hermann J."/>
            <person name="Jolles J."/>
            <person name="Jolles P."/>
        </authorList>
    </citation>
    <scope>PROTEIN SEQUENCE OF 19-147 (LYSOZYME II)</scope>
</reference>
<reference key="4">
    <citation type="journal article" date="1973" name="Arch. Biochem. Biophys.">
        <title>The disulfide bridges of duck egg-white lysozyme II.</title>
        <authorList>
            <person name="Hermann J."/>
            <person name="Jolles J."/>
            <person name="Jolles P."/>
        </authorList>
    </citation>
    <scope>DISULFIDE BONDS</scope>
</reference>
<reference key="5">
    <citation type="journal article" date="1971" name="J. Biol. Chem.">
        <title>Multiple lysozymes of duck egg white.</title>
        <authorList>
            <person name="Prager E.M."/>
            <person name="Wilson A.C."/>
        </authorList>
    </citation>
    <scope>CHARACTERIZATION OF VARIANTS DL-1; DL-2 AND DL-3C</scope>
    <source>
        <strain>Pekin breed</strain>
    </source>
</reference>
<accession>P00705</accession>
<sequence>MKALLTLVFCLLPLAAQGKVYSRCELAAAMKRLGLDNYRGYSLGNWVCAANYESGFNTQATNRNTDGSTDYGILQINSRWWCDNGKTPRSKNACGIPCSVLLRSDITEAVRCAKRIVSDGDGMNAWVAWRNRCRGTDVSKWIRGCRL</sequence>
<dbReference type="EC" id="3.2.1.17"/>
<dbReference type="PIR" id="D92574">
    <property type="entry name" value="LZDK"/>
</dbReference>
<dbReference type="PDB" id="5V8G">
    <property type="method" value="X-ray"/>
    <property type="resolution" value="1.20 A"/>
    <property type="chains" value="A=19-145"/>
</dbReference>
<dbReference type="PDB" id="5V92">
    <property type="method" value="X-ray"/>
    <property type="resolution" value="1.11 A"/>
    <property type="chains" value="A/B=19-147"/>
</dbReference>
<dbReference type="PDB" id="5V94">
    <property type="method" value="X-ray"/>
    <property type="resolution" value="1.65 A"/>
    <property type="chains" value="A/B=19-147"/>
</dbReference>
<dbReference type="PDB" id="6D9I">
    <property type="method" value="X-ray"/>
    <property type="resolution" value="1.15 A"/>
    <property type="chains" value="A/B=19-147"/>
</dbReference>
<dbReference type="PDBsum" id="5V8G"/>
<dbReference type="PDBsum" id="5V92"/>
<dbReference type="PDBsum" id="5V94"/>
<dbReference type="PDBsum" id="6D9I"/>
<dbReference type="SMR" id="P00705"/>
<dbReference type="CAZy" id="GH22">
    <property type="family name" value="Glycoside Hydrolase Family 22"/>
</dbReference>
<dbReference type="ABCD" id="P00705">
    <property type="antibodies" value="1 sequenced antibody"/>
</dbReference>
<dbReference type="BRENDA" id="3.2.1.17">
    <property type="organism ID" value="334"/>
</dbReference>
<dbReference type="Proteomes" id="UP000694400">
    <property type="component" value="Unplaced"/>
</dbReference>
<dbReference type="GO" id="GO:0005576">
    <property type="term" value="C:extracellular region"/>
    <property type="evidence" value="ECO:0007669"/>
    <property type="project" value="UniProtKB-SubCell"/>
</dbReference>
<dbReference type="GO" id="GO:0003796">
    <property type="term" value="F:lysozyme activity"/>
    <property type="evidence" value="ECO:0007669"/>
    <property type="project" value="UniProtKB-EC"/>
</dbReference>
<dbReference type="GO" id="GO:0050829">
    <property type="term" value="P:defense response to Gram-negative bacterium"/>
    <property type="evidence" value="ECO:0007669"/>
    <property type="project" value="TreeGrafter"/>
</dbReference>
<dbReference type="GO" id="GO:0050830">
    <property type="term" value="P:defense response to Gram-positive bacterium"/>
    <property type="evidence" value="ECO:0007669"/>
    <property type="project" value="TreeGrafter"/>
</dbReference>
<dbReference type="GO" id="GO:0031640">
    <property type="term" value="P:killing of cells of another organism"/>
    <property type="evidence" value="ECO:0007669"/>
    <property type="project" value="UniProtKB-KW"/>
</dbReference>
<dbReference type="CDD" id="cd16897">
    <property type="entry name" value="LYZ_C"/>
    <property type="match status" value="1"/>
</dbReference>
<dbReference type="FunFam" id="1.10.530.10:FF:000001">
    <property type="entry name" value="Lysozyme C"/>
    <property type="match status" value="1"/>
</dbReference>
<dbReference type="Gene3D" id="1.10.530.10">
    <property type="match status" value="1"/>
</dbReference>
<dbReference type="InterPro" id="IPR001916">
    <property type="entry name" value="Glyco_hydro_22"/>
</dbReference>
<dbReference type="InterPro" id="IPR019799">
    <property type="entry name" value="Glyco_hydro_22_CS"/>
</dbReference>
<dbReference type="InterPro" id="IPR000974">
    <property type="entry name" value="Glyco_hydro_22_lys"/>
</dbReference>
<dbReference type="InterPro" id="IPR023346">
    <property type="entry name" value="Lysozyme-like_dom_sf"/>
</dbReference>
<dbReference type="PANTHER" id="PTHR11407">
    <property type="entry name" value="LYSOZYME C"/>
    <property type="match status" value="1"/>
</dbReference>
<dbReference type="PANTHER" id="PTHR11407:SF28">
    <property type="entry name" value="LYSOZYME C"/>
    <property type="match status" value="1"/>
</dbReference>
<dbReference type="Pfam" id="PF00062">
    <property type="entry name" value="Lys"/>
    <property type="match status" value="1"/>
</dbReference>
<dbReference type="PRINTS" id="PR00137">
    <property type="entry name" value="LYSOZYME"/>
</dbReference>
<dbReference type="PRINTS" id="PR00135">
    <property type="entry name" value="LYZLACT"/>
</dbReference>
<dbReference type="SMART" id="SM00263">
    <property type="entry name" value="LYZ1"/>
    <property type="match status" value="1"/>
</dbReference>
<dbReference type="SUPFAM" id="SSF53955">
    <property type="entry name" value="Lysozyme-like"/>
    <property type="match status" value="1"/>
</dbReference>
<dbReference type="PROSITE" id="PS00128">
    <property type="entry name" value="GLYCOSYL_HYDROL_F22_1"/>
    <property type="match status" value="1"/>
</dbReference>
<dbReference type="PROSITE" id="PS51348">
    <property type="entry name" value="GLYCOSYL_HYDROL_F22_2"/>
    <property type="match status" value="1"/>
</dbReference>
<organism>
    <name type="scientific">Anas platyrhynchos</name>
    <name type="common">Mallard</name>
    <name type="synonym">Anas boschas</name>
    <dbReference type="NCBI Taxonomy" id="8839"/>
    <lineage>
        <taxon>Eukaryota</taxon>
        <taxon>Metazoa</taxon>
        <taxon>Chordata</taxon>
        <taxon>Craniata</taxon>
        <taxon>Vertebrata</taxon>
        <taxon>Euteleostomi</taxon>
        <taxon>Archelosauria</taxon>
        <taxon>Archosauria</taxon>
        <taxon>Dinosauria</taxon>
        <taxon>Saurischia</taxon>
        <taxon>Theropoda</taxon>
        <taxon>Coelurosauria</taxon>
        <taxon>Aves</taxon>
        <taxon>Neognathae</taxon>
        <taxon>Galloanserae</taxon>
        <taxon>Anseriformes</taxon>
        <taxon>Anatidae</taxon>
        <taxon>Anatinae</taxon>
        <taxon>Anas</taxon>
    </lineage>
</organism>
<evidence type="ECO:0000255" key="1">
    <source>
        <dbReference type="PROSITE-ProRule" id="PRU00680"/>
    </source>
</evidence>
<evidence type="ECO:0000269" key="2">
    <source>
    </source>
</evidence>
<evidence type="ECO:0000269" key="3">
    <source>
    </source>
</evidence>
<evidence type="ECO:0000269" key="4">
    <source>
    </source>
</evidence>
<evidence type="ECO:0007829" key="5">
    <source>
        <dbReference type="PDB" id="5V92"/>
    </source>
</evidence>
<evidence type="ECO:0007829" key="6">
    <source>
        <dbReference type="PDB" id="6D9I"/>
    </source>
</evidence>
<name>LYSC1_ANAPL</name>
<keyword id="KW-0002">3D-structure</keyword>
<keyword id="KW-0929">Antimicrobial</keyword>
<keyword id="KW-0081">Bacteriolytic enzyme</keyword>
<keyword id="KW-0903">Direct protein sequencing</keyword>
<keyword id="KW-1015">Disulfide bond</keyword>
<keyword id="KW-0326">Glycosidase</keyword>
<keyword id="KW-0378">Hydrolase</keyword>
<keyword id="KW-0964">Secreted</keyword>
<keyword id="KW-0732">Signal</keyword>